<proteinExistence type="inferred from homology"/>
<sequence>MSIQTDDFSAADLPPVKRVMSAAPASPHEEAIERALRPKLFDEYVGQAKVREQLEIFIGAAKKRSEALDHVLLFGPPGLGKTTLSHIIAHELGVNLRQTSGPVLEKPKDLAALLTNLEKNDVLFIDEIHRLSPVVEEILYPALEDYQIDIMIGEGPAARSIKLDLQPFTLVGATTRAGMLTNPLRDRFGIVARLEFYTAEELGRIVRRSASLLNAPMDEEGGFEIARRSRGTPRIANRLLRRVRDYADVKGTGQITLDIANKALAMLDVDPQGFDVMDRKLLEAVIHRFDGGPVGLDNIAASIGEERDTIEDVIEPYLIQQGYLQRTPRGRIATLAAYRHLGVAPPVSGNDMFT</sequence>
<dbReference type="EC" id="3.6.4.-" evidence="1"/>
<dbReference type="EMBL" id="CP000316">
    <property type="protein sequence ID" value="ABE45986.1"/>
    <property type="molecule type" value="Genomic_DNA"/>
</dbReference>
<dbReference type="RefSeq" id="WP_011484976.1">
    <property type="nucleotide sequence ID" value="NC_007948.1"/>
</dbReference>
<dbReference type="SMR" id="Q124Q6"/>
<dbReference type="STRING" id="296591.Bpro_4093"/>
<dbReference type="KEGG" id="pol:Bpro_4093"/>
<dbReference type="eggNOG" id="COG2255">
    <property type="taxonomic scope" value="Bacteria"/>
</dbReference>
<dbReference type="HOGENOM" id="CLU_055599_1_0_4"/>
<dbReference type="OrthoDB" id="9804478at2"/>
<dbReference type="Proteomes" id="UP000001983">
    <property type="component" value="Chromosome"/>
</dbReference>
<dbReference type="GO" id="GO:0005737">
    <property type="term" value="C:cytoplasm"/>
    <property type="evidence" value="ECO:0007669"/>
    <property type="project" value="UniProtKB-SubCell"/>
</dbReference>
<dbReference type="GO" id="GO:0048476">
    <property type="term" value="C:Holliday junction resolvase complex"/>
    <property type="evidence" value="ECO:0007669"/>
    <property type="project" value="UniProtKB-UniRule"/>
</dbReference>
<dbReference type="GO" id="GO:0005524">
    <property type="term" value="F:ATP binding"/>
    <property type="evidence" value="ECO:0007669"/>
    <property type="project" value="UniProtKB-UniRule"/>
</dbReference>
<dbReference type="GO" id="GO:0016887">
    <property type="term" value="F:ATP hydrolysis activity"/>
    <property type="evidence" value="ECO:0007669"/>
    <property type="project" value="InterPro"/>
</dbReference>
<dbReference type="GO" id="GO:0000400">
    <property type="term" value="F:four-way junction DNA binding"/>
    <property type="evidence" value="ECO:0007669"/>
    <property type="project" value="UniProtKB-UniRule"/>
</dbReference>
<dbReference type="GO" id="GO:0009378">
    <property type="term" value="F:four-way junction helicase activity"/>
    <property type="evidence" value="ECO:0007669"/>
    <property type="project" value="InterPro"/>
</dbReference>
<dbReference type="GO" id="GO:0006310">
    <property type="term" value="P:DNA recombination"/>
    <property type="evidence" value="ECO:0007669"/>
    <property type="project" value="UniProtKB-UniRule"/>
</dbReference>
<dbReference type="GO" id="GO:0006281">
    <property type="term" value="P:DNA repair"/>
    <property type="evidence" value="ECO:0007669"/>
    <property type="project" value="UniProtKB-UniRule"/>
</dbReference>
<dbReference type="CDD" id="cd00009">
    <property type="entry name" value="AAA"/>
    <property type="match status" value="1"/>
</dbReference>
<dbReference type="FunFam" id="1.10.10.10:FF:000086">
    <property type="entry name" value="Holliday junction ATP-dependent DNA helicase RuvB"/>
    <property type="match status" value="1"/>
</dbReference>
<dbReference type="FunFam" id="1.10.8.60:FF:000023">
    <property type="entry name" value="Holliday junction ATP-dependent DNA helicase RuvB"/>
    <property type="match status" value="1"/>
</dbReference>
<dbReference type="FunFam" id="3.40.50.300:FF:000073">
    <property type="entry name" value="Holliday junction ATP-dependent DNA helicase RuvB"/>
    <property type="match status" value="1"/>
</dbReference>
<dbReference type="Gene3D" id="1.10.8.60">
    <property type="match status" value="1"/>
</dbReference>
<dbReference type="Gene3D" id="3.40.50.300">
    <property type="entry name" value="P-loop containing nucleotide triphosphate hydrolases"/>
    <property type="match status" value="1"/>
</dbReference>
<dbReference type="Gene3D" id="1.10.10.10">
    <property type="entry name" value="Winged helix-like DNA-binding domain superfamily/Winged helix DNA-binding domain"/>
    <property type="match status" value="1"/>
</dbReference>
<dbReference type="HAMAP" id="MF_00016">
    <property type="entry name" value="DNA_HJ_migration_RuvB"/>
    <property type="match status" value="1"/>
</dbReference>
<dbReference type="InterPro" id="IPR003593">
    <property type="entry name" value="AAA+_ATPase"/>
</dbReference>
<dbReference type="InterPro" id="IPR041445">
    <property type="entry name" value="AAA_lid_4"/>
</dbReference>
<dbReference type="InterPro" id="IPR004605">
    <property type="entry name" value="DNA_helicase_Holl-junc_RuvB"/>
</dbReference>
<dbReference type="InterPro" id="IPR027417">
    <property type="entry name" value="P-loop_NTPase"/>
</dbReference>
<dbReference type="InterPro" id="IPR008824">
    <property type="entry name" value="RuvB-like_N"/>
</dbReference>
<dbReference type="InterPro" id="IPR008823">
    <property type="entry name" value="RuvB_C"/>
</dbReference>
<dbReference type="InterPro" id="IPR036388">
    <property type="entry name" value="WH-like_DNA-bd_sf"/>
</dbReference>
<dbReference type="InterPro" id="IPR036390">
    <property type="entry name" value="WH_DNA-bd_sf"/>
</dbReference>
<dbReference type="NCBIfam" id="NF000868">
    <property type="entry name" value="PRK00080.1"/>
    <property type="match status" value="1"/>
</dbReference>
<dbReference type="NCBIfam" id="TIGR00635">
    <property type="entry name" value="ruvB"/>
    <property type="match status" value="1"/>
</dbReference>
<dbReference type="PANTHER" id="PTHR42848">
    <property type="match status" value="1"/>
</dbReference>
<dbReference type="PANTHER" id="PTHR42848:SF1">
    <property type="entry name" value="HOLLIDAY JUNCTION BRANCH MIGRATION COMPLEX SUBUNIT RUVB"/>
    <property type="match status" value="1"/>
</dbReference>
<dbReference type="Pfam" id="PF17864">
    <property type="entry name" value="AAA_lid_4"/>
    <property type="match status" value="1"/>
</dbReference>
<dbReference type="Pfam" id="PF05491">
    <property type="entry name" value="RuvB_C"/>
    <property type="match status" value="1"/>
</dbReference>
<dbReference type="Pfam" id="PF05496">
    <property type="entry name" value="RuvB_N"/>
    <property type="match status" value="1"/>
</dbReference>
<dbReference type="SMART" id="SM00382">
    <property type="entry name" value="AAA"/>
    <property type="match status" value="1"/>
</dbReference>
<dbReference type="SUPFAM" id="SSF52540">
    <property type="entry name" value="P-loop containing nucleoside triphosphate hydrolases"/>
    <property type="match status" value="1"/>
</dbReference>
<dbReference type="SUPFAM" id="SSF46785">
    <property type="entry name" value="Winged helix' DNA-binding domain"/>
    <property type="match status" value="1"/>
</dbReference>
<reference key="1">
    <citation type="journal article" date="2008" name="Appl. Environ. Microbiol.">
        <title>The genome of Polaromonas sp. strain JS666: insights into the evolution of a hydrocarbon- and xenobiotic-degrading bacterium, and features of relevance to biotechnology.</title>
        <authorList>
            <person name="Mattes T.E."/>
            <person name="Alexander A.K."/>
            <person name="Richardson P.M."/>
            <person name="Munk A.C."/>
            <person name="Han C.S."/>
            <person name="Stothard P."/>
            <person name="Coleman N.V."/>
        </authorList>
    </citation>
    <scope>NUCLEOTIDE SEQUENCE [LARGE SCALE GENOMIC DNA]</scope>
    <source>
        <strain>JS666 / ATCC BAA-500</strain>
    </source>
</reference>
<keyword id="KW-0067">ATP-binding</keyword>
<keyword id="KW-0963">Cytoplasm</keyword>
<keyword id="KW-0227">DNA damage</keyword>
<keyword id="KW-0233">DNA recombination</keyword>
<keyword id="KW-0234">DNA repair</keyword>
<keyword id="KW-0238">DNA-binding</keyword>
<keyword id="KW-0378">Hydrolase</keyword>
<keyword id="KW-0547">Nucleotide-binding</keyword>
<keyword id="KW-1185">Reference proteome</keyword>
<organism>
    <name type="scientific">Polaromonas sp. (strain JS666 / ATCC BAA-500)</name>
    <dbReference type="NCBI Taxonomy" id="296591"/>
    <lineage>
        <taxon>Bacteria</taxon>
        <taxon>Pseudomonadati</taxon>
        <taxon>Pseudomonadota</taxon>
        <taxon>Betaproteobacteria</taxon>
        <taxon>Burkholderiales</taxon>
        <taxon>Comamonadaceae</taxon>
        <taxon>Polaromonas</taxon>
    </lineage>
</organism>
<evidence type="ECO:0000255" key="1">
    <source>
        <dbReference type="HAMAP-Rule" id="MF_00016"/>
    </source>
</evidence>
<comment type="function">
    <text evidence="1">The RuvA-RuvB-RuvC complex processes Holliday junction (HJ) DNA during genetic recombination and DNA repair, while the RuvA-RuvB complex plays an important role in the rescue of blocked DNA replication forks via replication fork reversal (RFR). RuvA specifically binds to HJ cruciform DNA, conferring on it an open structure. The RuvB hexamer acts as an ATP-dependent pump, pulling dsDNA into and through the RuvAB complex. RuvB forms 2 homohexamers on either side of HJ DNA bound by 1 or 2 RuvA tetramers; 4 subunits per hexamer contact DNA at a time. Coordinated motions by a converter formed by DNA-disengaged RuvB subunits stimulates ATP hydrolysis and nucleotide exchange. Immobilization of the converter enables RuvB to convert the ATP-contained energy into a lever motion, pulling 2 nucleotides of DNA out of the RuvA tetramer per ATP hydrolyzed, thus driving DNA branch migration. The RuvB motors rotate together with the DNA substrate, which together with the progressing nucleotide cycle form the mechanistic basis for DNA recombination by continuous HJ branch migration. Branch migration allows RuvC to scan DNA until it finds its consensus sequence, where it cleaves and resolves cruciform DNA.</text>
</comment>
<comment type="catalytic activity">
    <reaction evidence="1">
        <text>ATP + H2O = ADP + phosphate + H(+)</text>
        <dbReference type="Rhea" id="RHEA:13065"/>
        <dbReference type="ChEBI" id="CHEBI:15377"/>
        <dbReference type="ChEBI" id="CHEBI:15378"/>
        <dbReference type="ChEBI" id="CHEBI:30616"/>
        <dbReference type="ChEBI" id="CHEBI:43474"/>
        <dbReference type="ChEBI" id="CHEBI:456216"/>
    </reaction>
</comment>
<comment type="subunit">
    <text evidence="1">Homohexamer. Forms an RuvA(8)-RuvB(12)-Holliday junction (HJ) complex. HJ DNA is sandwiched between 2 RuvA tetramers; dsDNA enters through RuvA and exits via RuvB. An RuvB hexamer assembles on each DNA strand where it exits the tetramer. Each RuvB hexamer is contacted by two RuvA subunits (via domain III) on 2 adjacent RuvB subunits; this complex drives branch migration. In the full resolvosome a probable DNA-RuvA(4)-RuvB(12)-RuvC(2) complex forms which resolves the HJ.</text>
</comment>
<comment type="subcellular location">
    <subcellularLocation>
        <location evidence="1">Cytoplasm</location>
    </subcellularLocation>
</comment>
<comment type="domain">
    <text evidence="1">Has 3 domains, the large (RuvB-L) and small ATPase (RuvB-S) domains and the C-terminal head (RuvB-H) domain. The head domain binds DNA, while the ATPase domains jointly bind ATP, ADP or are empty depending on the state of the subunit in the translocation cycle. During a single DNA translocation step the structure of each domain remains the same, but their relative positions change.</text>
</comment>
<comment type="similarity">
    <text evidence="1">Belongs to the RuvB family.</text>
</comment>
<protein>
    <recommendedName>
        <fullName evidence="1">Holliday junction branch migration complex subunit RuvB</fullName>
        <ecNumber evidence="1">3.6.4.-</ecNumber>
    </recommendedName>
</protein>
<gene>
    <name evidence="1" type="primary">ruvB</name>
    <name type="ordered locus">Bpro_4093</name>
</gene>
<feature type="chain" id="PRO_0000322829" description="Holliday junction branch migration complex subunit RuvB">
    <location>
        <begin position="1"/>
        <end position="354"/>
    </location>
</feature>
<feature type="region of interest" description="Large ATPase domain (RuvB-L)" evidence="1">
    <location>
        <begin position="5"/>
        <end position="197"/>
    </location>
</feature>
<feature type="region of interest" description="Small ATPAse domain (RuvB-S)" evidence="1">
    <location>
        <begin position="198"/>
        <end position="268"/>
    </location>
</feature>
<feature type="region of interest" description="Head domain (RuvB-H)" evidence="1">
    <location>
        <begin position="271"/>
        <end position="354"/>
    </location>
</feature>
<feature type="binding site" evidence="1">
    <location>
        <position position="36"/>
    </location>
    <ligand>
        <name>ATP</name>
        <dbReference type="ChEBI" id="CHEBI:30616"/>
    </ligand>
</feature>
<feature type="binding site" evidence="1">
    <location>
        <position position="37"/>
    </location>
    <ligand>
        <name>ATP</name>
        <dbReference type="ChEBI" id="CHEBI:30616"/>
    </ligand>
</feature>
<feature type="binding site" evidence="1">
    <location>
        <position position="78"/>
    </location>
    <ligand>
        <name>ATP</name>
        <dbReference type="ChEBI" id="CHEBI:30616"/>
    </ligand>
</feature>
<feature type="binding site" evidence="1">
    <location>
        <position position="81"/>
    </location>
    <ligand>
        <name>ATP</name>
        <dbReference type="ChEBI" id="CHEBI:30616"/>
    </ligand>
</feature>
<feature type="binding site" evidence="1">
    <location>
        <position position="82"/>
    </location>
    <ligand>
        <name>ATP</name>
        <dbReference type="ChEBI" id="CHEBI:30616"/>
    </ligand>
</feature>
<feature type="binding site" evidence="1">
    <location>
        <position position="82"/>
    </location>
    <ligand>
        <name>Mg(2+)</name>
        <dbReference type="ChEBI" id="CHEBI:18420"/>
    </ligand>
</feature>
<feature type="binding site" evidence="1">
    <location>
        <position position="83"/>
    </location>
    <ligand>
        <name>ATP</name>
        <dbReference type="ChEBI" id="CHEBI:30616"/>
    </ligand>
</feature>
<feature type="binding site" evidence="1">
    <location>
        <begin position="144"/>
        <end position="146"/>
    </location>
    <ligand>
        <name>ATP</name>
        <dbReference type="ChEBI" id="CHEBI:30616"/>
    </ligand>
</feature>
<feature type="binding site" evidence="1">
    <location>
        <position position="187"/>
    </location>
    <ligand>
        <name>ATP</name>
        <dbReference type="ChEBI" id="CHEBI:30616"/>
    </ligand>
</feature>
<feature type="binding site" evidence="1">
    <location>
        <position position="197"/>
    </location>
    <ligand>
        <name>ATP</name>
        <dbReference type="ChEBI" id="CHEBI:30616"/>
    </ligand>
</feature>
<feature type="binding site" evidence="1">
    <location>
        <position position="234"/>
    </location>
    <ligand>
        <name>ATP</name>
        <dbReference type="ChEBI" id="CHEBI:30616"/>
    </ligand>
</feature>
<feature type="binding site" evidence="1">
    <location>
        <position position="307"/>
    </location>
    <ligand>
        <name>DNA</name>
        <dbReference type="ChEBI" id="CHEBI:16991"/>
    </ligand>
</feature>
<feature type="binding site" evidence="1">
    <location>
        <position position="326"/>
    </location>
    <ligand>
        <name>DNA</name>
        <dbReference type="ChEBI" id="CHEBI:16991"/>
    </ligand>
</feature>
<feature type="binding site" evidence="1">
    <location>
        <position position="331"/>
    </location>
    <ligand>
        <name>DNA</name>
        <dbReference type="ChEBI" id="CHEBI:16991"/>
    </ligand>
</feature>
<name>RUVB_POLSJ</name>
<accession>Q124Q6</accession>